<proteinExistence type="evidence at transcript level"/>
<organism>
    <name type="scientific">Dictyostelium discoideum</name>
    <name type="common">Social amoeba</name>
    <dbReference type="NCBI Taxonomy" id="44689"/>
    <lineage>
        <taxon>Eukaryota</taxon>
        <taxon>Amoebozoa</taxon>
        <taxon>Evosea</taxon>
        <taxon>Eumycetozoa</taxon>
        <taxon>Dictyostelia</taxon>
        <taxon>Dictyosteliales</taxon>
        <taxon>Dictyosteliaceae</taxon>
        <taxon>Dictyostelium</taxon>
    </lineage>
</organism>
<sequence>MEQLKEGNSYFVDEQYDEALKCYDKACLELSNNAEAFFKRSQCHSKLSNLKEALSDINTSIKLDSNNSKYYLKKGQLCFELEEFDTALKTFEKGQSIDSENSSFKTWIRKSKAEIQSNPTTTTTTTPTPTPTPTPAPQPVTTTTNPTPIPTTSNTTTTTNNNNNNNNNNNNNNNNNNTTTDSTTTKLPIPSSGNKVRHEWYQTETHVVLTIFAKFVTASNSKINLTSKSVNISFPLANGSEFLFEMDLFDPIVDKDSTIHYYSTKVEIKMKKSRAIKWDTLEFTDKSGPVGLMDQISSSPAVPSPYASKKDWDKLPNEPEEKLEGDQALNKIFRDIFSKGSEDQQRAMMKSFTESGGTVLSTNWDEVGSKKVVGEPPKGLEFKQYEK</sequence>
<protein>
    <recommendedName>
        <fullName evidence="2">Protein SGT1 homolog</fullName>
    </recommendedName>
    <alternativeName>
        <fullName evidence="2">Suppressor of G2 allele of SKP1 homolog</fullName>
    </alternativeName>
</protein>
<accession>Q55ED0</accession>
<dbReference type="EMBL" id="AAFI02000005">
    <property type="protein sequence ID" value="EAL71996.1"/>
    <property type="molecule type" value="Genomic_DNA"/>
</dbReference>
<dbReference type="RefSeq" id="XP_645851.1">
    <property type="nucleotide sequence ID" value="XM_640759.1"/>
</dbReference>
<dbReference type="SMR" id="Q55ED0"/>
<dbReference type="FunCoup" id="Q55ED0">
    <property type="interactions" value="6"/>
</dbReference>
<dbReference type="STRING" id="44689.Q55ED0"/>
<dbReference type="GlyGen" id="Q55ED0">
    <property type="glycosylation" value="3 sites"/>
</dbReference>
<dbReference type="PaxDb" id="44689-DDB0267067"/>
<dbReference type="EnsemblProtists" id="EAL71996">
    <property type="protein sequence ID" value="EAL71996"/>
    <property type="gene ID" value="DDB_G0269292"/>
</dbReference>
<dbReference type="GeneID" id="8616795"/>
<dbReference type="KEGG" id="ddi:DDB_G0269292"/>
<dbReference type="dictyBase" id="DDB_G0269292">
    <property type="gene designation" value="sugt1"/>
</dbReference>
<dbReference type="VEuPathDB" id="AmoebaDB:DDB_G0269292"/>
<dbReference type="eggNOG" id="KOG0548">
    <property type="taxonomic scope" value="Eukaryota"/>
</dbReference>
<dbReference type="eggNOG" id="KOG1309">
    <property type="taxonomic scope" value="Eukaryota"/>
</dbReference>
<dbReference type="HOGENOM" id="CLU_039532_1_0_1"/>
<dbReference type="InParanoid" id="Q55ED0"/>
<dbReference type="OMA" id="WIKKCEE"/>
<dbReference type="PhylomeDB" id="Q55ED0"/>
<dbReference type="Reactome" id="R-DDI-844456">
    <property type="pathway name" value="The NLRP3 inflammasome"/>
</dbReference>
<dbReference type="PRO" id="PR:Q55ED0"/>
<dbReference type="Proteomes" id="UP000002195">
    <property type="component" value="Chromosome 1"/>
</dbReference>
<dbReference type="GO" id="GO:0000151">
    <property type="term" value="C:ubiquitin ligase complex"/>
    <property type="evidence" value="ECO:0000250"/>
    <property type="project" value="dictyBase"/>
</dbReference>
<dbReference type="GO" id="GO:0051087">
    <property type="term" value="F:protein-folding chaperone binding"/>
    <property type="evidence" value="ECO:0007669"/>
    <property type="project" value="InterPro"/>
</dbReference>
<dbReference type="CDD" id="cd06466">
    <property type="entry name" value="p23_CS_SGT1_like"/>
    <property type="match status" value="1"/>
</dbReference>
<dbReference type="FunFam" id="2.60.40.790:FF:000041">
    <property type="entry name" value="Protein SGT1 homolog A"/>
    <property type="match status" value="1"/>
</dbReference>
<dbReference type="Gene3D" id="2.60.40.790">
    <property type="match status" value="1"/>
</dbReference>
<dbReference type="Gene3D" id="1.25.40.10">
    <property type="entry name" value="Tetratricopeptide repeat domain"/>
    <property type="match status" value="1"/>
</dbReference>
<dbReference type="InterPro" id="IPR007052">
    <property type="entry name" value="CS_dom"/>
</dbReference>
<dbReference type="InterPro" id="IPR008978">
    <property type="entry name" value="HSP20-like_chaperone"/>
</dbReference>
<dbReference type="InterPro" id="IPR007699">
    <property type="entry name" value="SGS_dom"/>
</dbReference>
<dbReference type="InterPro" id="IPR044563">
    <property type="entry name" value="Sgt1-like"/>
</dbReference>
<dbReference type="InterPro" id="IPR011990">
    <property type="entry name" value="TPR-like_helical_dom_sf"/>
</dbReference>
<dbReference type="InterPro" id="IPR019734">
    <property type="entry name" value="TPR_rpt"/>
</dbReference>
<dbReference type="PANTHER" id="PTHR45862">
    <property type="entry name" value="PROTEIN SGT1 HOMOLOG"/>
    <property type="match status" value="1"/>
</dbReference>
<dbReference type="Pfam" id="PF12895">
    <property type="entry name" value="ANAPC3"/>
    <property type="match status" value="1"/>
</dbReference>
<dbReference type="Pfam" id="PF04969">
    <property type="entry name" value="CS"/>
    <property type="match status" value="1"/>
</dbReference>
<dbReference type="Pfam" id="PF05002">
    <property type="entry name" value="SGS"/>
    <property type="match status" value="1"/>
</dbReference>
<dbReference type="SMART" id="SM00028">
    <property type="entry name" value="TPR"/>
    <property type="match status" value="3"/>
</dbReference>
<dbReference type="SUPFAM" id="SSF49764">
    <property type="entry name" value="HSP20-like chaperones"/>
    <property type="match status" value="1"/>
</dbReference>
<dbReference type="SUPFAM" id="SSF48452">
    <property type="entry name" value="TPR-like"/>
    <property type="match status" value="1"/>
</dbReference>
<dbReference type="PROSITE" id="PS51203">
    <property type="entry name" value="CS"/>
    <property type="match status" value="1"/>
</dbReference>
<dbReference type="PROSITE" id="PS51048">
    <property type="entry name" value="SGS"/>
    <property type="match status" value="1"/>
</dbReference>
<dbReference type="PROSITE" id="PS50005">
    <property type="entry name" value="TPR"/>
    <property type="match status" value="2"/>
</dbReference>
<dbReference type="PROSITE" id="PS50293">
    <property type="entry name" value="TPR_REGION"/>
    <property type="match status" value="1"/>
</dbReference>
<feature type="chain" id="PRO_0000330903" description="Protein SGT1 homolog">
    <location>
        <begin position="1"/>
        <end position="387"/>
    </location>
</feature>
<feature type="repeat" description="TPR 1">
    <location>
        <begin position="1"/>
        <end position="34"/>
    </location>
</feature>
<feature type="repeat" description="TPR 2">
    <location>
        <begin position="36"/>
        <end position="67"/>
    </location>
</feature>
<feature type="repeat" description="TPR 3">
    <location>
        <begin position="68"/>
        <end position="101"/>
    </location>
</feature>
<feature type="domain" description="CS" evidence="4">
    <location>
        <begin position="193"/>
        <end position="282"/>
    </location>
</feature>
<feature type="domain" description="SGS" evidence="3">
    <location>
        <begin position="301"/>
        <end position="387"/>
    </location>
</feature>
<feature type="region of interest" description="Disordered" evidence="5">
    <location>
        <begin position="110"/>
        <end position="193"/>
    </location>
</feature>
<feature type="region of interest" description="Disordered" evidence="5">
    <location>
        <begin position="299"/>
        <end position="323"/>
    </location>
</feature>
<feature type="compositionally biased region" description="Low complexity" evidence="5">
    <location>
        <begin position="118"/>
        <end position="127"/>
    </location>
</feature>
<feature type="compositionally biased region" description="Pro residues" evidence="5">
    <location>
        <begin position="128"/>
        <end position="138"/>
    </location>
</feature>
<feature type="compositionally biased region" description="Low complexity" evidence="5">
    <location>
        <begin position="139"/>
        <end position="185"/>
    </location>
</feature>
<feature type="compositionally biased region" description="Basic and acidic residues" evidence="5">
    <location>
        <begin position="308"/>
        <end position="323"/>
    </location>
</feature>
<comment type="function">
    <text evidence="1">May play a role in ubiquitination and subsequent proteasomal degradation of target proteins.</text>
</comment>
<comment type="similarity">
    <text evidence="6">Belongs to the SGT1 family.</text>
</comment>
<keyword id="KW-1185">Reference proteome</keyword>
<keyword id="KW-0677">Repeat</keyword>
<keyword id="KW-0802">TPR repeat</keyword>
<keyword id="KW-0833">Ubl conjugation pathway</keyword>
<evidence type="ECO:0000250" key="1"/>
<evidence type="ECO:0000250" key="2">
    <source>
        <dbReference type="UniProtKB" id="Q08446"/>
    </source>
</evidence>
<evidence type="ECO:0000255" key="3">
    <source>
        <dbReference type="PROSITE-ProRule" id="PRU00386"/>
    </source>
</evidence>
<evidence type="ECO:0000255" key="4">
    <source>
        <dbReference type="PROSITE-ProRule" id="PRU00547"/>
    </source>
</evidence>
<evidence type="ECO:0000256" key="5">
    <source>
        <dbReference type="SAM" id="MobiDB-lite"/>
    </source>
</evidence>
<evidence type="ECO:0000305" key="6"/>
<gene>
    <name type="primary">sugt1</name>
    <name type="ORF">DDB_G0269292</name>
</gene>
<reference key="1">
    <citation type="journal article" date="2005" name="Nature">
        <title>The genome of the social amoeba Dictyostelium discoideum.</title>
        <authorList>
            <person name="Eichinger L."/>
            <person name="Pachebat J.A."/>
            <person name="Gloeckner G."/>
            <person name="Rajandream M.A."/>
            <person name="Sucgang R."/>
            <person name="Berriman M."/>
            <person name="Song J."/>
            <person name="Olsen R."/>
            <person name="Szafranski K."/>
            <person name="Xu Q."/>
            <person name="Tunggal B."/>
            <person name="Kummerfeld S."/>
            <person name="Madera M."/>
            <person name="Konfortov B.A."/>
            <person name="Rivero F."/>
            <person name="Bankier A.T."/>
            <person name="Lehmann R."/>
            <person name="Hamlin N."/>
            <person name="Davies R."/>
            <person name="Gaudet P."/>
            <person name="Fey P."/>
            <person name="Pilcher K."/>
            <person name="Chen G."/>
            <person name="Saunders D."/>
            <person name="Sodergren E.J."/>
            <person name="Davis P."/>
            <person name="Kerhornou A."/>
            <person name="Nie X."/>
            <person name="Hall N."/>
            <person name="Anjard C."/>
            <person name="Hemphill L."/>
            <person name="Bason N."/>
            <person name="Farbrother P."/>
            <person name="Desany B."/>
            <person name="Just E."/>
            <person name="Morio T."/>
            <person name="Rost R."/>
            <person name="Churcher C.M."/>
            <person name="Cooper J."/>
            <person name="Haydock S."/>
            <person name="van Driessche N."/>
            <person name="Cronin A."/>
            <person name="Goodhead I."/>
            <person name="Muzny D.M."/>
            <person name="Mourier T."/>
            <person name="Pain A."/>
            <person name="Lu M."/>
            <person name="Harper D."/>
            <person name="Lindsay R."/>
            <person name="Hauser H."/>
            <person name="James K.D."/>
            <person name="Quiles M."/>
            <person name="Madan Babu M."/>
            <person name="Saito T."/>
            <person name="Buchrieser C."/>
            <person name="Wardroper A."/>
            <person name="Felder M."/>
            <person name="Thangavelu M."/>
            <person name="Johnson D."/>
            <person name="Knights A."/>
            <person name="Loulseged H."/>
            <person name="Mungall K.L."/>
            <person name="Oliver K."/>
            <person name="Price C."/>
            <person name="Quail M.A."/>
            <person name="Urushihara H."/>
            <person name="Hernandez J."/>
            <person name="Rabbinowitsch E."/>
            <person name="Steffen D."/>
            <person name="Sanders M."/>
            <person name="Ma J."/>
            <person name="Kohara Y."/>
            <person name="Sharp S."/>
            <person name="Simmonds M.N."/>
            <person name="Spiegler S."/>
            <person name="Tivey A."/>
            <person name="Sugano S."/>
            <person name="White B."/>
            <person name="Walker D."/>
            <person name="Woodward J.R."/>
            <person name="Winckler T."/>
            <person name="Tanaka Y."/>
            <person name="Shaulsky G."/>
            <person name="Schleicher M."/>
            <person name="Weinstock G.M."/>
            <person name="Rosenthal A."/>
            <person name="Cox E.C."/>
            <person name="Chisholm R.L."/>
            <person name="Gibbs R.A."/>
            <person name="Loomis W.F."/>
            <person name="Platzer M."/>
            <person name="Kay R.R."/>
            <person name="Williams J.G."/>
            <person name="Dear P.H."/>
            <person name="Noegel A.A."/>
            <person name="Barrell B.G."/>
            <person name="Kuspa A."/>
        </authorList>
    </citation>
    <scope>NUCLEOTIDE SEQUENCE [LARGE SCALE GENOMIC DNA]</scope>
    <source>
        <strain>AX4</strain>
    </source>
</reference>
<name>SGT1_DICDI</name>